<organism>
    <name type="scientific">Chlamydia abortus (strain DSM 27085 / S26/3)</name>
    <name type="common">Chlamydophila abortus</name>
    <dbReference type="NCBI Taxonomy" id="218497"/>
    <lineage>
        <taxon>Bacteria</taxon>
        <taxon>Pseudomonadati</taxon>
        <taxon>Chlamydiota</taxon>
        <taxon>Chlamydiia</taxon>
        <taxon>Chlamydiales</taxon>
        <taxon>Chlamydiaceae</taxon>
        <taxon>Chlamydia/Chlamydophila group</taxon>
        <taxon>Chlamydia</taxon>
    </lineage>
</organism>
<sequence length="207" mass="23165">MHIIIAGIDTDVGKTFVSAILTVLLQAEYWKPIQSGSLNHSDSAIVHALSGARCHPESYRFSHALAAHQAAQIDNITMHQETITLPKTDASLIIETSGGFLSPCTHDSLQGDVFAQWPCHWVLVSKAYLGSINHTCLTLEAMRARNLSILGIILNQYPKEEEDWLLRTTGLPFLGRLNYEKSISKATVQNYANLWKETWKYRDTLLC</sequence>
<comment type="function">
    <text evidence="1">Catalyzes a mechanistically unusual reaction, the ATP-dependent insertion of CO2 between the N7 and N8 nitrogen atoms of 7,8-diaminopelargonic acid (DAPA, also called 7,8-diammoniononanoate) to form a ureido ring.</text>
</comment>
<comment type="catalytic activity">
    <reaction evidence="1">
        <text>(7R,8S)-7,8-diammoniononanoate + CO2 + ATP = (4R,5S)-dethiobiotin + ADP + phosphate + 3 H(+)</text>
        <dbReference type="Rhea" id="RHEA:15805"/>
        <dbReference type="ChEBI" id="CHEBI:15378"/>
        <dbReference type="ChEBI" id="CHEBI:16526"/>
        <dbReference type="ChEBI" id="CHEBI:30616"/>
        <dbReference type="ChEBI" id="CHEBI:43474"/>
        <dbReference type="ChEBI" id="CHEBI:149469"/>
        <dbReference type="ChEBI" id="CHEBI:149473"/>
        <dbReference type="ChEBI" id="CHEBI:456216"/>
        <dbReference type="EC" id="6.3.3.3"/>
    </reaction>
</comment>
<comment type="cofactor">
    <cofactor evidence="1">
        <name>Mg(2+)</name>
        <dbReference type="ChEBI" id="CHEBI:18420"/>
    </cofactor>
</comment>
<comment type="pathway">
    <text evidence="1">Cofactor biosynthesis; biotin biosynthesis; biotin from 7,8-diaminononanoate: step 1/2.</text>
</comment>
<comment type="subunit">
    <text evidence="1">Homodimer.</text>
</comment>
<comment type="subcellular location">
    <subcellularLocation>
        <location evidence="1">Cytoplasm</location>
    </subcellularLocation>
</comment>
<comment type="similarity">
    <text evidence="1">Belongs to the dethiobiotin synthetase family.</text>
</comment>
<keyword id="KW-0067">ATP-binding</keyword>
<keyword id="KW-0093">Biotin biosynthesis</keyword>
<keyword id="KW-0963">Cytoplasm</keyword>
<keyword id="KW-0436">Ligase</keyword>
<keyword id="KW-0460">Magnesium</keyword>
<keyword id="KW-0479">Metal-binding</keyword>
<keyword id="KW-0547">Nucleotide-binding</keyword>
<feature type="chain" id="PRO_1000133208" description="ATP-dependent dethiobiotin synthetase BioD">
    <location>
        <begin position="1"/>
        <end position="207"/>
    </location>
</feature>
<feature type="active site" evidence="1">
    <location>
        <position position="31"/>
    </location>
</feature>
<feature type="binding site" evidence="1">
    <location>
        <begin position="11"/>
        <end position="16"/>
    </location>
    <ligand>
        <name>ATP</name>
        <dbReference type="ChEBI" id="CHEBI:30616"/>
    </ligand>
</feature>
<feature type="binding site" evidence="1">
    <location>
        <position position="15"/>
    </location>
    <ligand>
        <name>Mg(2+)</name>
        <dbReference type="ChEBI" id="CHEBI:18420"/>
    </ligand>
</feature>
<feature type="binding site" evidence="1">
    <location>
        <position position="35"/>
    </location>
    <ligand>
        <name>substrate</name>
    </ligand>
</feature>
<feature type="binding site" evidence="1">
    <location>
        <position position="42"/>
    </location>
    <ligand>
        <name>ATP</name>
        <dbReference type="ChEBI" id="CHEBI:30616"/>
    </ligand>
</feature>
<feature type="binding site" evidence="1">
    <location>
        <position position="42"/>
    </location>
    <ligand>
        <name>Mg(2+)</name>
        <dbReference type="ChEBI" id="CHEBI:18420"/>
    </ligand>
</feature>
<feature type="binding site" evidence="1">
    <location>
        <begin position="95"/>
        <end position="98"/>
    </location>
    <ligand>
        <name>ATP</name>
        <dbReference type="ChEBI" id="CHEBI:30616"/>
    </ligand>
</feature>
<feature type="binding site" evidence="1">
    <location>
        <position position="95"/>
    </location>
    <ligand>
        <name>Mg(2+)</name>
        <dbReference type="ChEBI" id="CHEBI:18420"/>
    </ligand>
</feature>
<feature type="binding site" evidence="1">
    <location>
        <begin position="155"/>
        <end position="156"/>
    </location>
    <ligand>
        <name>ATP</name>
        <dbReference type="ChEBI" id="CHEBI:30616"/>
    </ligand>
</feature>
<protein>
    <recommendedName>
        <fullName evidence="1">ATP-dependent dethiobiotin synthetase BioD</fullName>
        <ecNumber evidence="1">6.3.3.3</ecNumber>
    </recommendedName>
    <alternativeName>
        <fullName evidence="1">DTB synthetase</fullName>
        <shortName evidence="1">DTBS</shortName>
    </alternativeName>
    <alternativeName>
        <fullName evidence="1">Dethiobiotin synthase</fullName>
    </alternativeName>
</protein>
<proteinExistence type="inferred from homology"/>
<gene>
    <name evidence="1" type="primary">bioD</name>
    <name type="ordered locus">CAB687</name>
</gene>
<evidence type="ECO:0000255" key="1">
    <source>
        <dbReference type="HAMAP-Rule" id="MF_00336"/>
    </source>
</evidence>
<name>BIOD_CHLAB</name>
<dbReference type="EC" id="6.3.3.3" evidence="1"/>
<dbReference type="EMBL" id="CR848038">
    <property type="protein sequence ID" value="CAH64134.1"/>
    <property type="molecule type" value="Genomic_DNA"/>
</dbReference>
<dbReference type="RefSeq" id="WP_011097263.1">
    <property type="nucleotide sequence ID" value="NC_004552.2"/>
</dbReference>
<dbReference type="SMR" id="Q5L5F7"/>
<dbReference type="KEGG" id="cab:CAB687"/>
<dbReference type="eggNOG" id="COG0132">
    <property type="taxonomic scope" value="Bacteria"/>
</dbReference>
<dbReference type="HOGENOM" id="CLU_072551_2_0_0"/>
<dbReference type="OrthoDB" id="9802097at2"/>
<dbReference type="UniPathway" id="UPA00078">
    <property type="reaction ID" value="UER00161"/>
</dbReference>
<dbReference type="Proteomes" id="UP000001012">
    <property type="component" value="Chromosome"/>
</dbReference>
<dbReference type="GO" id="GO:0005829">
    <property type="term" value="C:cytosol"/>
    <property type="evidence" value="ECO:0007669"/>
    <property type="project" value="TreeGrafter"/>
</dbReference>
<dbReference type="GO" id="GO:0005524">
    <property type="term" value="F:ATP binding"/>
    <property type="evidence" value="ECO:0007669"/>
    <property type="project" value="UniProtKB-UniRule"/>
</dbReference>
<dbReference type="GO" id="GO:0004141">
    <property type="term" value="F:dethiobiotin synthase activity"/>
    <property type="evidence" value="ECO:0007669"/>
    <property type="project" value="UniProtKB-UniRule"/>
</dbReference>
<dbReference type="GO" id="GO:0000287">
    <property type="term" value="F:magnesium ion binding"/>
    <property type="evidence" value="ECO:0007669"/>
    <property type="project" value="UniProtKB-UniRule"/>
</dbReference>
<dbReference type="GO" id="GO:0009102">
    <property type="term" value="P:biotin biosynthetic process"/>
    <property type="evidence" value="ECO:0007669"/>
    <property type="project" value="UniProtKB-UniRule"/>
</dbReference>
<dbReference type="CDD" id="cd03109">
    <property type="entry name" value="DTBS"/>
    <property type="match status" value="1"/>
</dbReference>
<dbReference type="Gene3D" id="3.40.50.300">
    <property type="entry name" value="P-loop containing nucleotide triphosphate hydrolases"/>
    <property type="match status" value="1"/>
</dbReference>
<dbReference type="HAMAP" id="MF_00336">
    <property type="entry name" value="BioD"/>
    <property type="match status" value="1"/>
</dbReference>
<dbReference type="InterPro" id="IPR004472">
    <property type="entry name" value="DTB_synth_BioD"/>
</dbReference>
<dbReference type="InterPro" id="IPR027417">
    <property type="entry name" value="P-loop_NTPase"/>
</dbReference>
<dbReference type="NCBIfam" id="TIGR00347">
    <property type="entry name" value="bioD"/>
    <property type="match status" value="1"/>
</dbReference>
<dbReference type="PANTHER" id="PTHR43210:SF2">
    <property type="entry name" value="ATP-DEPENDENT DETHIOBIOTIN SYNTHETASE BIOD 2"/>
    <property type="match status" value="1"/>
</dbReference>
<dbReference type="PANTHER" id="PTHR43210">
    <property type="entry name" value="DETHIOBIOTIN SYNTHETASE"/>
    <property type="match status" value="1"/>
</dbReference>
<dbReference type="Pfam" id="PF13500">
    <property type="entry name" value="AAA_26"/>
    <property type="match status" value="1"/>
</dbReference>
<dbReference type="PIRSF" id="PIRSF006755">
    <property type="entry name" value="DTB_synth"/>
    <property type="match status" value="1"/>
</dbReference>
<dbReference type="SUPFAM" id="SSF52540">
    <property type="entry name" value="P-loop containing nucleoside triphosphate hydrolases"/>
    <property type="match status" value="1"/>
</dbReference>
<reference key="1">
    <citation type="journal article" date="2005" name="Genome Res.">
        <title>The Chlamydophila abortus genome sequence reveals an array of variable proteins that contribute to interspecies variation.</title>
        <authorList>
            <person name="Thomson N.R."/>
            <person name="Yeats C."/>
            <person name="Bell K."/>
            <person name="Holden M.T.G."/>
            <person name="Bentley S.D."/>
            <person name="Livingstone M."/>
            <person name="Cerdeno-Tarraga A.-M."/>
            <person name="Harris B."/>
            <person name="Doggett J."/>
            <person name="Ormond D."/>
            <person name="Mungall K."/>
            <person name="Clarke K."/>
            <person name="Feltwell T."/>
            <person name="Hance Z."/>
            <person name="Sanders M."/>
            <person name="Quail M.A."/>
            <person name="Price C."/>
            <person name="Barrell B.G."/>
            <person name="Parkhill J."/>
            <person name="Longbottom D."/>
        </authorList>
    </citation>
    <scope>NUCLEOTIDE SEQUENCE [LARGE SCALE GENOMIC DNA]</scope>
    <source>
        <strain>DSM 27085 / S26/3</strain>
    </source>
</reference>
<accession>Q5L5F7</accession>